<proteinExistence type="evidence at protein level"/>
<gene>
    <name type="primary">Ccdc134</name>
</gene>
<keyword id="KW-0025">Alternative splicing</keyword>
<keyword id="KW-0175">Coiled coil</keyword>
<keyword id="KW-0963">Cytoplasm</keyword>
<keyword id="KW-0256">Endoplasmic reticulum</keyword>
<keyword id="KW-0325">Glycoprotein</keyword>
<keyword id="KW-0539">Nucleus</keyword>
<keyword id="KW-1185">Reference proteome</keyword>
<keyword id="KW-0964">Secreted</keyword>
<keyword id="KW-0732">Signal</keyword>
<accession>Q8C7V8</accession>
<accession>Q3U3V9</accession>
<name>CC134_MOUSE</name>
<comment type="function">
    <text evidence="1">Molecular adapter required to prevent protein hyperglycosylation of HSP90B1: during translation, associates with nascent HSP90B1 and the STT3A catalytic component of the OST-A complex and tethers them to a specialized translocon that forms a microenvironment for HSP90B1 folding. In the CCDC134-containing translocon, STT3A associates with the SRT pseudosubstrate motif of HSP90B1, preventing access to facultative glycosylation sites until folding is completed, preventing hyperglycosylation and subsequent degradation of HSP90B1. In extracellular secreted form, promotes proliferation and activation of CD8(+) T-cells, suggesting a cytokine-like function. May inhibit ERK and JNK signaling activity. May suppress cell migration and invasion activity, via its effects on ERK and JNK signaling. May also localize in the nucleus: enhances stability of the PCAF histone acetyltransferase (HAT) complex member TADA2A and thus promotes PCAF-mediated histone acetyltransferase activity. Has a critical role in the regulation of osteogenesis and bone development.</text>
</comment>
<comment type="subunit">
    <text evidence="1">Interacts with TADA2A. Associates with the PCAF complex via TADA2A binding.</text>
</comment>
<comment type="subcellular location">
    <subcellularLocation>
        <location evidence="1">Endoplasmic reticulum lumen</location>
    </subcellularLocation>
    <subcellularLocation>
        <location evidence="1">Secreted</location>
    </subcellularLocation>
    <subcellularLocation>
        <location evidence="1">Cytoplasm</location>
    </subcellularLocation>
    <subcellularLocation>
        <location evidence="1">Nucleus</location>
    </subcellularLocation>
    <text evidence="1">Mainly localizes to the endoplasmic reticulum. Accumulates in the nucleus in response to UV irradiation.</text>
</comment>
<comment type="alternative products">
    <event type="alternative splicing"/>
    <isoform>
        <id>Q8C7V8-1</id>
        <name>1</name>
        <sequence type="displayed"/>
    </isoform>
    <isoform>
        <id>Q8C7V8-2</id>
        <name>2</name>
        <sequence type="described" ref="VSP_021181"/>
    </isoform>
</comment>
<comment type="PTM">
    <text evidence="1">O-glycosylated, with additional sialic acid modifications.</text>
</comment>
<comment type="similarity">
    <text evidence="5">Belongs to the CCDC134 family.</text>
</comment>
<feature type="signal peptide" evidence="1">
    <location>
        <begin position="1"/>
        <end position="22"/>
    </location>
</feature>
<feature type="chain" id="PRO_0000254110" description="Coiled-coil domain-containing protein 134">
    <location>
        <begin position="23"/>
        <end position="229"/>
    </location>
</feature>
<feature type="region of interest" description="Disordered" evidence="3">
    <location>
        <begin position="182"/>
        <end position="229"/>
    </location>
</feature>
<feature type="coiled-coil region" evidence="2">
    <location>
        <begin position="196"/>
        <end position="218"/>
    </location>
</feature>
<feature type="short sequence motif" description="Prevents secretion from ER" evidence="1">
    <location>
        <begin position="226"/>
        <end position="229"/>
    </location>
</feature>
<feature type="glycosylation site" description="N-linked (GlcNAc...) asparagine" evidence="2">
    <location>
        <position position="148"/>
    </location>
</feature>
<feature type="splice variant" id="VSP_021181" description="In isoform 2." evidence="4">
    <location>
        <begin position="1"/>
        <end position="37"/>
    </location>
</feature>
<feature type="sequence conflict" description="In Ref. 1; BAE32676." evidence="5" ref="1">
    <original>K</original>
    <variation>R</variation>
    <location>
        <position position="75"/>
    </location>
</feature>
<sequence>MDLLQFLAAFSVLLWPGTEVTGALKSTLDPSLKIYKKMFEVKRREQLLALKNLAQLNDIHQQYKILDVMLKGLFKVLEDSRTVLIAADVLPDGPVPQDEKLKDAFSHVVENTAFFGDVVLRFPKIVHHYFDHNSNWNLLIRWGISFCNQTGVFDQGPHSPILSLMAQELGITEKDSDFRNPFKTDQTEFIPSTDPFQKALREEEKRRKKEERRKEIRKGPRISRSQSEL</sequence>
<protein>
    <recommendedName>
        <fullName>Coiled-coil domain-containing protein 134</fullName>
    </recommendedName>
</protein>
<organism>
    <name type="scientific">Mus musculus</name>
    <name type="common">Mouse</name>
    <dbReference type="NCBI Taxonomy" id="10090"/>
    <lineage>
        <taxon>Eukaryota</taxon>
        <taxon>Metazoa</taxon>
        <taxon>Chordata</taxon>
        <taxon>Craniata</taxon>
        <taxon>Vertebrata</taxon>
        <taxon>Euteleostomi</taxon>
        <taxon>Mammalia</taxon>
        <taxon>Eutheria</taxon>
        <taxon>Euarchontoglires</taxon>
        <taxon>Glires</taxon>
        <taxon>Rodentia</taxon>
        <taxon>Myomorpha</taxon>
        <taxon>Muroidea</taxon>
        <taxon>Muridae</taxon>
        <taxon>Murinae</taxon>
        <taxon>Mus</taxon>
        <taxon>Mus</taxon>
    </lineage>
</organism>
<reference key="1">
    <citation type="journal article" date="2005" name="Science">
        <title>The transcriptional landscape of the mammalian genome.</title>
        <authorList>
            <person name="Carninci P."/>
            <person name="Kasukawa T."/>
            <person name="Katayama S."/>
            <person name="Gough J."/>
            <person name="Frith M.C."/>
            <person name="Maeda N."/>
            <person name="Oyama R."/>
            <person name="Ravasi T."/>
            <person name="Lenhard B."/>
            <person name="Wells C."/>
            <person name="Kodzius R."/>
            <person name="Shimokawa K."/>
            <person name="Bajic V.B."/>
            <person name="Brenner S.E."/>
            <person name="Batalov S."/>
            <person name="Forrest A.R."/>
            <person name="Zavolan M."/>
            <person name="Davis M.J."/>
            <person name="Wilming L.G."/>
            <person name="Aidinis V."/>
            <person name="Allen J.E."/>
            <person name="Ambesi-Impiombato A."/>
            <person name="Apweiler R."/>
            <person name="Aturaliya R.N."/>
            <person name="Bailey T.L."/>
            <person name="Bansal M."/>
            <person name="Baxter L."/>
            <person name="Beisel K.W."/>
            <person name="Bersano T."/>
            <person name="Bono H."/>
            <person name="Chalk A.M."/>
            <person name="Chiu K.P."/>
            <person name="Choudhary V."/>
            <person name="Christoffels A."/>
            <person name="Clutterbuck D.R."/>
            <person name="Crowe M.L."/>
            <person name="Dalla E."/>
            <person name="Dalrymple B.P."/>
            <person name="de Bono B."/>
            <person name="Della Gatta G."/>
            <person name="di Bernardo D."/>
            <person name="Down T."/>
            <person name="Engstrom P."/>
            <person name="Fagiolini M."/>
            <person name="Faulkner G."/>
            <person name="Fletcher C.F."/>
            <person name="Fukushima T."/>
            <person name="Furuno M."/>
            <person name="Futaki S."/>
            <person name="Gariboldi M."/>
            <person name="Georgii-Hemming P."/>
            <person name="Gingeras T.R."/>
            <person name="Gojobori T."/>
            <person name="Green R.E."/>
            <person name="Gustincich S."/>
            <person name="Harbers M."/>
            <person name="Hayashi Y."/>
            <person name="Hensch T.K."/>
            <person name="Hirokawa N."/>
            <person name="Hill D."/>
            <person name="Huminiecki L."/>
            <person name="Iacono M."/>
            <person name="Ikeo K."/>
            <person name="Iwama A."/>
            <person name="Ishikawa T."/>
            <person name="Jakt M."/>
            <person name="Kanapin A."/>
            <person name="Katoh M."/>
            <person name="Kawasawa Y."/>
            <person name="Kelso J."/>
            <person name="Kitamura H."/>
            <person name="Kitano H."/>
            <person name="Kollias G."/>
            <person name="Krishnan S.P."/>
            <person name="Kruger A."/>
            <person name="Kummerfeld S.K."/>
            <person name="Kurochkin I.V."/>
            <person name="Lareau L.F."/>
            <person name="Lazarevic D."/>
            <person name="Lipovich L."/>
            <person name="Liu J."/>
            <person name="Liuni S."/>
            <person name="McWilliam S."/>
            <person name="Madan Babu M."/>
            <person name="Madera M."/>
            <person name="Marchionni L."/>
            <person name="Matsuda H."/>
            <person name="Matsuzawa S."/>
            <person name="Miki H."/>
            <person name="Mignone F."/>
            <person name="Miyake S."/>
            <person name="Morris K."/>
            <person name="Mottagui-Tabar S."/>
            <person name="Mulder N."/>
            <person name="Nakano N."/>
            <person name="Nakauchi H."/>
            <person name="Ng P."/>
            <person name="Nilsson R."/>
            <person name="Nishiguchi S."/>
            <person name="Nishikawa S."/>
            <person name="Nori F."/>
            <person name="Ohara O."/>
            <person name="Okazaki Y."/>
            <person name="Orlando V."/>
            <person name="Pang K.C."/>
            <person name="Pavan W.J."/>
            <person name="Pavesi G."/>
            <person name="Pesole G."/>
            <person name="Petrovsky N."/>
            <person name="Piazza S."/>
            <person name="Reed J."/>
            <person name="Reid J.F."/>
            <person name="Ring B.Z."/>
            <person name="Ringwald M."/>
            <person name="Rost B."/>
            <person name="Ruan Y."/>
            <person name="Salzberg S.L."/>
            <person name="Sandelin A."/>
            <person name="Schneider C."/>
            <person name="Schoenbach C."/>
            <person name="Sekiguchi K."/>
            <person name="Semple C.A."/>
            <person name="Seno S."/>
            <person name="Sessa L."/>
            <person name="Sheng Y."/>
            <person name="Shibata Y."/>
            <person name="Shimada H."/>
            <person name="Shimada K."/>
            <person name="Silva D."/>
            <person name="Sinclair B."/>
            <person name="Sperling S."/>
            <person name="Stupka E."/>
            <person name="Sugiura K."/>
            <person name="Sultana R."/>
            <person name="Takenaka Y."/>
            <person name="Taki K."/>
            <person name="Tammoja K."/>
            <person name="Tan S.L."/>
            <person name="Tang S."/>
            <person name="Taylor M.S."/>
            <person name="Tegner J."/>
            <person name="Teichmann S.A."/>
            <person name="Ueda H.R."/>
            <person name="van Nimwegen E."/>
            <person name="Verardo R."/>
            <person name="Wei C.L."/>
            <person name="Yagi K."/>
            <person name="Yamanishi H."/>
            <person name="Zabarovsky E."/>
            <person name="Zhu S."/>
            <person name="Zimmer A."/>
            <person name="Hide W."/>
            <person name="Bult C."/>
            <person name="Grimmond S.M."/>
            <person name="Teasdale R.D."/>
            <person name="Liu E.T."/>
            <person name="Brusic V."/>
            <person name="Quackenbush J."/>
            <person name="Wahlestedt C."/>
            <person name="Mattick J.S."/>
            <person name="Hume D.A."/>
            <person name="Kai C."/>
            <person name="Sasaki D."/>
            <person name="Tomaru Y."/>
            <person name="Fukuda S."/>
            <person name="Kanamori-Katayama M."/>
            <person name="Suzuki M."/>
            <person name="Aoki J."/>
            <person name="Arakawa T."/>
            <person name="Iida J."/>
            <person name="Imamura K."/>
            <person name="Itoh M."/>
            <person name="Kato T."/>
            <person name="Kawaji H."/>
            <person name="Kawagashira N."/>
            <person name="Kawashima T."/>
            <person name="Kojima M."/>
            <person name="Kondo S."/>
            <person name="Konno H."/>
            <person name="Nakano K."/>
            <person name="Ninomiya N."/>
            <person name="Nishio T."/>
            <person name="Okada M."/>
            <person name="Plessy C."/>
            <person name="Shibata K."/>
            <person name="Shiraki T."/>
            <person name="Suzuki S."/>
            <person name="Tagami M."/>
            <person name="Waki K."/>
            <person name="Watahiki A."/>
            <person name="Okamura-Oho Y."/>
            <person name="Suzuki H."/>
            <person name="Kawai J."/>
            <person name="Hayashizaki Y."/>
        </authorList>
    </citation>
    <scope>NUCLEOTIDE SEQUENCE [LARGE SCALE MRNA] (ISOFORMS 1 AND 2)</scope>
    <source>
        <strain>C57BL/6J</strain>
        <strain>NOD</strain>
        <tissue>Blastocyst</tissue>
        <tissue>Dendritic cell</tissue>
        <tissue>Embryonic stem cell</tissue>
    </source>
</reference>
<reference key="2">
    <citation type="journal article" date="2004" name="Genome Res.">
        <title>The status, quality, and expansion of the NIH full-length cDNA project: the Mammalian Gene Collection (MGC).</title>
        <authorList>
            <consortium name="The MGC Project Team"/>
        </authorList>
    </citation>
    <scope>NUCLEOTIDE SEQUENCE [LARGE SCALE MRNA] (ISOFORM 1)</scope>
    <source>
        <strain>C57BL/6J</strain>
        <tissue>Brain</tissue>
    </source>
</reference>
<reference key="3">
    <citation type="journal article" date="2010" name="Cell">
        <title>A tissue-specific atlas of mouse protein phosphorylation and expression.</title>
        <authorList>
            <person name="Huttlin E.L."/>
            <person name="Jedrychowski M.P."/>
            <person name="Elias J.E."/>
            <person name="Goswami T."/>
            <person name="Rad R."/>
            <person name="Beausoleil S.A."/>
            <person name="Villen J."/>
            <person name="Haas W."/>
            <person name="Sowa M.E."/>
            <person name="Gygi S.P."/>
        </authorList>
    </citation>
    <scope>IDENTIFICATION BY MASS SPECTROMETRY [LARGE SCALE ANALYSIS]</scope>
    <source>
        <tissue>Liver</tissue>
        <tissue>Lung</tissue>
        <tissue>Pancreas</tissue>
        <tissue>Spleen</tissue>
        <tissue>Testis</tissue>
    </source>
</reference>
<evidence type="ECO:0000250" key="1">
    <source>
        <dbReference type="UniProtKB" id="Q9H6E4"/>
    </source>
</evidence>
<evidence type="ECO:0000255" key="2"/>
<evidence type="ECO:0000256" key="3">
    <source>
        <dbReference type="SAM" id="MobiDB-lite"/>
    </source>
</evidence>
<evidence type="ECO:0000303" key="4">
    <source>
    </source>
</evidence>
<evidence type="ECO:0000305" key="5"/>
<dbReference type="EMBL" id="AK049165">
    <property type="protein sequence ID" value="BAC33581.1"/>
    <property type="molecule type" value="mRNA"/>
</dbReference>
<dbReference type="EMBL" id="AK145747">
    <property type="protein sequence ID" value="BAE26624.1"/>
    <property type="molecule type" value="mRNA"/>
</dbReference>
<dbReference type="EMBL" id="AK154557">
    <property type="protein sequence ID" value="BAE32676.1"/>
    <property type="molecule type" value="mRNA"/>
</dbReference>
<dbReference type="EMBL" id="BC072586">
    <property type="protein sequence ID" value="AAH72586.1"/>
    <property type="molecule type" value="mRNA"/>
</dbReference>
<dbReference type="CCDS" id="CCDS37155.1">
    <molecule id="Q8C7V8-1"/>
</dbReference>
<dbReference type="RefSeq" id="NP_001313517.1">
    <molecule id="Q8C7V8-2"/>
    <property type="nucleotide sequence ID" value="NM_001326588.1"/>
</dbReference>
<dbReference type="RefSeq" id="NP_766016.2">
    <molecule id="Q8C7V8-1"/>
    <property type="nucleotide sequence ID" value="NM_172428.2"/>
</dbReference>
<dbReference type="SMR" id="Q8C7V8"/>
<dbReference type="FunCoup" id="Q8C7V8">
    <property type="interactions" value="1933"/>
</dbReference>
<dbReference type="IntAct" id="Q8C7V8">
    <property type="interactions" value="1"/>
</dbReference>
<dbReference type="STRING" id="10090.ENSMUSP00000086578"/>
<dbReference type="GlyGen" id="Q8C7V8">
    <property type="glycosylation" value="1 site, 1 O-linked glycan (1 site)"/>
</dbReference>
<dbReference type="PhosphoSitePlus" id="Q8C7V8"/>
<dbReference type="PaxDb" id="10090-ENSMUSP00000086578"/>
<dbReference type="PeptideAtlas" id="Q8C7V8"/>
<dbReference type="ProteomicsDB" id="265690">
    <molecule id="Q8C7V8-1"/>
</dbReference>
<dbReference type="ProteomicsDB" id="265691">
    <molecule id="Q8C7V8-2"/>
</dbReference>
<dbReference type="Pumba" id="Q8C7V8"/>
<dbReference type="Antibodypedia" id="289">
    <property type="antibodies" value="223 antibodies from 30 providers"/>
</dbReference>
<dbReference type="DNASU" id="76457"/>
<dbReference type="Ensembl" id="ENSMUST00000089174.6">
    <molecule id="Q8C7V8-1"/>
    <property type="protein sequence ID" value="ENSMUSP00000086578.5"/>
    <property type="gene ID" value="ENSMUSG00000068114.8"/>
</dbReference>
<dbReference type="GeneID" id="76457"/>
<dbReference type="KEGG" id="mmu:76457"/>
<dbReference type="UCSC" id="uc007wye.1">
    <molecule id="Q8C7V8-1"/>
    <property type="organism name" value="mouse"/>
</dbReference>
<dbReference type="AGR" id="MGI:1923707"/>
<dbReference type="CTD" id="79879"/>
<dbReference type="MGI" id="MGI:1923707">
    <property type="gene designation" value="Ccdc134"/>
</dbReference>
<dbReference type="VEuPathDB" id="HostDB:ENSMUSG00000068114"/>
<dbReference type="eggNOG" id="ENOG502QVE7">
    <property type="taxonomic scope" value="Eukaryota"/>
</dbReference>
<dbReference type="GeneTree" id="ENSGT00390000020164"/>
<dbReference type="HOGENOM" id="CLU_099195_0_0_1"/>
<dbReference type="InParanoid" id="Q8C7V8"/>
<dbReference type="OMA" id="GIGFCNQ"/>
<dbReference type="OrthoDB" id="5854099at2759"/>
<dbReference type="PhylomeDB" id="Q8C7V8"/>
<dbReference type="TreeFam" id="TF323839"/>
<dbReference type="BioGRID-ORCS" id="76457">
    <property type="hits" value="5 hits in 78 CRISPR screens"/>
</dbReference>
<dbReference type="ChiTaRS" id="Ccdc134">
    <property type="organism name" value="mouse"/>
</dbReference>
<dbReference type="PRO" id="PR:Q8C7V8"/>
<dbReference type="Proteomes" id="UP000000589">
    <property type="component" value="Chromosome 15"/>
</dbReference>
<dbReference type="RNAct" id="Q8C7V8">
    <property type="molecule type" value="protein"/>
</dbReference>
<dbReference type="Bgee" id="ENSMUSG00000068114">
    <property type="expression patterns" value="Expressed in spermatocyte and 206 other cell types or tissues"/>
</dbReference>
<dbReference type="ExpressionAtlas" id="Q8C7V8">
    <property type="expression patterns" value="baseline and differential"/>
</dbReference>
<dbReference type="GO" id="GO:0005829">
    <property type="term" value="C:cytosol"/>
    <property type="evidence" value="ECO:0007669"/>
    <property type="project" value="Ensembl"/>
</dbReference>
<dbReference type="GO" id="GO:0005788">
    <property type="term" value="C:endoplasmic reticulum lumen"/>
    <property type="evidence" value="ECO:0000250"/>
    <property type="project" value="UniProtKB"/>
</dbReference>
<dbReference type="GO" id="GO:0005576">
    <property type="term" value="C:extracellular region"/>
    <property type="evidence" value="ECO:0007669"/>
    <property type="project" value="UniProtKB-SubCell"/>
</dbReference>
<dbReference type="GO" id="GO:0005634">
    <property type="term" value="C:nucleus"/>
    <property type="evidence" value="ECO:0007669"/>
    <property type="project" value="UniProtKB-SubCell"/>
</dbReference>
<dbReference type="GO" id="GO:0030674">
    <property type="term" value="F:protein-macromolecule adaptor activity"/>
    <property type="evidence" value="ECO:0000250"/>
    <property type="project" value="UniProtKB"/>
</dbReference>
<dbReference type="GO" id="GO:0001525">
    <property type="term" value="P:angiogenesis"/>
    <property type="evidence" value="ECO:0000315"/>
    <property type="project" value="MGI"/>
</dbReference>
<dbReference type="GO" id="GO:0035162">
    <property type="term" value="P:embryonic hemopoiesis"/>
    <property type="evidence" value="ECO:0000315"/>
    <property type="project" value="MGI"/>
</dbReference>
<dbReference type="GO" id="GO:1990402">
    <property type="term" value="P:embryonic liver development"/>
    <property type="evidence" value="ECO:0000315"/>
    <property type="project" value="MGI"/>
</dbReference>
<dbReference type="GO" id="GO:0001890">
    <property type="term" value="P:placenta development"/>
    <property type="evidence" value="ECO:0000315"/>
    <property type="project" value="MGI"/>
</dbReference>
<dbReference type="GO" id="GO:0034126">
    <property type="term" value="P:positive regulation of MyD88-dependent toll-like receptor signaling pathway"/>
    <property type="evidence" value="ECO:0000250"/>
    <property type="project" value="UniProtKB"/>
</dbReference>
<dbReference type="GO" id="GO:0030177">
    <property type="term" value="P:positive regulation of Wnt signaling pathway"/>
    <property type="evidence" value="ECO:0000250"/>
    <property type="project" value="UniProtKB"/>
</dbReference>
<dbReference type="GO" id="GO:0030278">
    <property type="term" value="P:regulation of ossification"/>
    <property type="evidence" value="ECO:0007669"/>
    <property type="project" value="Ensembl"/>
</dbReference>
<dbReference type="GO" id="GO:0060049">
    <property type="term" value="P:regulation of protein glycosylation"/>
    <property type="evidence" value="ECO:0000250"/>
    <property type="project" value="UniProtKB"/>
</dbReference>
<dbReference type="GO" id="GO:0021591">
    <property type="term" value="P:ventricular system development"/>
    <property type="evidence" value="ECO:0000315"/>
    <property type="project" value="MGI"/>
</dbReference>
<dbReference type="InterPro" id="IPR026321">
    <property type="entry name" value="Coiled-coil_dom_con_pro_134"/>
</dbReference>
<dbReference type="PANTHER" id="PTHR14735">
    <property type="entry name" value="COILED-COIL DOMAIN-CONTAINING PROTEIN 134"/>
    <property type="match status" value="1"/>
</dbReference>
<dbReference type="PANTHER" id="PTHR14735:SF1">
    <property type="entry name" value="COILED-COIL DOMAIN-CONTAINING PROTEIN 134"/>
    <property type="match status" value="1"/>
</dbReference>
<dbReference type="Pfam" id="PF15002">
    <property type="entry name" value="ERK-JNK_inhib"/>
    <property type="match status" value="1"/>
</dbReference>